<accession>Q3KLX8</accession>
<evidence type="ECO:0000255" key="1">
    <source>
        <dbReference type="HAMAP-Rule" id="MF_01517"/>
    </source>
</evidence>
<protein>
    <recommendedName>
        <fullName evidence="1">Malate dehydrogenase</fullName>
        <ecNumber evidence="1">1.1.1.37</ecNumber>
    </recommendedName>
</protein>
<proteinExistence type="inferred from homology"/>
<name>MDH_CHLTA</name>
<gene>
    <name evidence="1" type="primary">mdh</name>
    <name type="ordered locus">CTA_0410</name>
</gene>
<reference key="1">
    <citation type="journal article" date="2005" name="Infect. Immun.">
        <title>Comparative genomic analysis of Chlamydia trachomatis oculotropic and genitotropic strains.</title>
        <authorList>
            <person name="Carlson J.H."/>
            <person name="Porcella S.F."/>
            <person name="McClarty G."/>
            <person name="Caldwell H.D."/>
        </authorList>
    </citation>
    <scope>NUCLEOTIDE SEQUENCE [LARGE SCALE GENOMIC DNA]</scope>
    <source>
        <strain>ATCC VR-571B / DSM 19440 / HAR-13</strain>
    </source>
</reference>
<comment type="function">
    <text evidence="1">Catalyzes the reversible oxidation of malate to oxaloacetate.</text>
</comment>
<comment type="catalytic activity">
    <reaction evidence="1">
        <text>(S)-malate + NAD(+) = oxaloacetate + NADH + H(+)</text>
        <dbReference type="Rhea" id="RHEA:21432"/>
        <dbReference type="ChEBI" id="CHEBI:15378"/>
        <dbReference type="ChEBI" id="CHEBI:15589"/>
        <dbReference type="ChEBI" id="CHEBI:16452"/>
        <dbReference type="ChEBI" id="CHEBI:57540"/>
        <dbReference type="ChEBI" id="CHEBI:57945"/>
        <dbReference type="EC" id="1.1.1.37"/>
    </reaction>
</comment>
<comment type="similarity">
    <text evidence="1">Belongs to the LDH/MDH superfamily. MDH type 2 family.</text>
</comment>
<keyword id="KW-0520">NAD</keyword>
<keyword id="KW-0560">Oxidoreductase</keyword>
<keyword id="KW-0816">Tricarboxylic acid cycle</keyword>
<dbReference type="EC" id="1.1.1.37" evidence="1"/>
<dbReference type="EMBL" id="CP000051">
    <property type="protein sequence ID" value="AAX50644.1"/>
    <property type="molecule type" value="Genomic_DNA"/>
</dbReference>
<dbReference type="RefSeq" id="WP_011324711.1">
    <property type="nucleotide sequence ID" value="NC_007429.1"/>
</dbReference>
<dbReference type="SMR" id="Q3KLX8"/>
<dbReference type="KEGG" id="cta:CTA_0410"/>
<dbReference type="HOGENOM" id="CLU_040727_2_0_0"/>
<dbReference type="Proteomes" id="UP000002532">
    <property type="component" value="Chromosome"/>
</dbReference>
<dbReference type="GO" id="GO:0030060">
    <property type="term" value="F:L-malate dehydrogenase (NAD+) activity"/>
    <property type="evidence" value="ECO:0007669"/>
    <property type="project" value="UniProtKB-UniRule"/>
</dbReference>
<dbReference type="GO" id="GO:0006108">
    <property type="term" value="P:malate metabolic process"/>
    <property type="evidence" value="ECO:0007669"/>
    <property type="project" value="InterPro"/>
</dbReference>
<dbReference type="GO" id="GO:0006099">
    <property type="term" value="P:tricarboxylic acid cycle"/>
    <property type="evidence" value="ECO:0007669"/>
    <property type="project" value="UniProtKB-UniRule"/>
</dbReference>
<dbReference type="FunFam" id="3.40.50.720:FF:000010">
    <property type="entry name" value="Malate dehydrogenase"/>
    <property type="match status" value="1"/>
</dbReference>
<dbReference type="FunFam" id="3.90.110.10:FF:000002">
    <property type="entry name" value="Malate dehydrogenase"/>
    <property type="match status" value="1"/>
</dbReference>
<dbReference type="Gene3D" id="3.90.110.10">
    <property type="entry name" value="Lactate dehydrogenase/glycoside hydrolase, family 4, C-terminal"/>
    <property type="match status" value="1"/>
</dbReference>
<dbReference type="Gene3D" id="3.40.50.720">
    <property type="entry name" value="NAD(P)-binding Rossmann-like Domain"/>
    <property type="match status" value="1"/>
</dbReference>
<dbReference type="HAMAP" id="MF_01517">
    <property type="entry name" value="Malate_dehydrog_2"/>
    <property type="match status" value="1"/>
</dbReference>
<dbReference type="InterPro" id="IPR001557">
    <property type="entry name" value="L-lactate/malate_DH"/>
</dbReference>
<dbReference type="InterPro" id="IPR022383">
    <property type="entry name" value="Lactate/malate_DH_C"/>
</dbReference>
<dbReference type="InterPro" id="IPR001236">
    <property type="entry name" value="Lactate/malate_DH_N"/>
</dbReference>
<dbReference type="InterPro" id="IPR015955">
    <property type="entry name" value="Lactate_DH/Glyco_Ohase_4_C"/>
</dbReference>
<dbReference type="InterPro" id="IPR010945">
    <property type="entry name" value="Malate_DH_type2"/>
</dbReference>
<dbReference type="InterPro" id="IPR036291">
    <property type="entry name" value="NAD(P)-bd_dom_sf"/>
</dbReference>
<dbReference type="NCBIfam" id="TIGR01759">
    <property type="entry name" value="MalateDH-SF1"/>
    <property type="match status" value="1"/>
</dbReference>
<dbReference type="NCBIfam" id="NF003916">
    <property type="entry name" value="PRK05442.1"/>
    <property type="match status" value="1"/>
</dbReference>
<dbReference type="PANTHER" id="PTHR23382">
    <property type="entry name" value="MALATE DEHYDROGENASE"/>
    <property type="match status" value="1"/>
</dbReference>
<dbReference type="Pfam" id="PF02866">
    <property type="entry name" value="Ldh_1_C"/>
    <property type="match status" value="1"/>
</dbReference>
<dbReference type="Pfam" id="PF00056">
    <property type="entry name" value="Ldh_1_N"/>
    <property type="match status" value="1"/>
</dbReference>
<dbReference type="PIRSF" id="PIRSF000102">
    <property type="entry name" value="Lac_mal_DH"/>
    <property type="match status" value="1"/>
</dbReference>
<dbReference type="SUPFAM" id="SSF56327">
    <property type="entry name" value="LDH C-terminal domain-like"/>
    <property type="match status" value="1"/>
</dbReference>
<dbReference type="SUPFAM" id="SSF51735">
    <property type="entry name" value="NAD(P)-binding Rossmann-fold domains"/>
    <property type="match status" value="1"/>
</dbReference>
<organism>
    <name type="scientific">Chlamydia trachomatis serovar A (strain ATCC VR-571B / DSM 19440 / HAR-13)</name>
    <dbReference type="NCBI Taxonomy" id="315277"/>
    <lineage>
        <taxon>Bacteria</taxon>
        <taxon>Pseudomonadati</taxon>
        <taxon>Chlamydiota</taxon>
        <taxon>Chlamydiia</taxon>
        <taxon>Chlamydiales</taxon>
        <taxon>Chlamydiaceae</taxon>
        <taxon>Chlamydia/Chlamydophila group</taxon>
        <taxon>Chlamydia</taxon>
    </lineage>
</organism>
<sequence length="326" mass="35676">MVSQTVSVAVTGGTGQIAYSFLFSLAHGDVFGLDCGIDLRIYDIPGTERALSGVRMELDDGAFPLLQRVQVTTSLHDAFDGIDAAFLIGSVPRGPGVERRDLLKKNGEIFATQGKALNTTAKRDAKIFVVGNPVNTNCWIAMNHAPRLLRKNFHAMLRLDQNRMHSMLSHRAEVPLSAVSQVVVWGNHSAKQVPDFTQALINDRPIAETIADRDWLENIMVPSVQSRGSAVIEARGKSSAASAARALAEAARSIYQPKEGEWFSSGVCSDHNPYGLPEDLIFGFPCRMLATGEYEVIPRLPWDAFIRGKMQISLDEILQEKASVSL</sequence>
<feature type="chain" id="PRO_0000294383" description="Malate dehydrogenase">
    <location>
        <begin position="1"/>
        <end position="326"/>
    </location>
</feature>
<feature type="active site" description="Proton acceptor" evidence="1">
    <location>
        <position position="188"/>
    </location>
</feature>
<feature type="binding site" evidence="1">
    <location>
        <begin position="12"/>
        <end position="18"/>
    </location>
    <ligand>
        <name>NAD(+)</name>
        <dbReference type="ChEBI" id="CHEBI:57540"/>
    </ligand>
</feature>
<feature type="binding site" evidence="1">
    <location>
        <position position="93"/>
    </location>
    <ligand>
        <name>substrate</name>
    </ligand>
</feature>
<feature type="binding site" evidence="1">
    <location>
        <position position="99"/>
    </location>
    <ligand>
        <name>substrate</name>
    </ligand>
</feature>
<feature type="binding site" evidence="1">
    <location>
        <position position="106"/>
    </location>
    <ligand>
        <name>NAD(+)</name>
        <dbReference type="ChEBI" id="CHEBI:57540"/>
    </ligand>
</feature>
<feature type="binding site" evidence="1">
    <location>
        <position position="113"/>
    </location>
    <ligand>
        <name>NAD(+)</name>
        <dbReference type="ChEBI" id="CHEBI:57540"/>
    </ligand>
</feature>
<feature type="binding site" evidence="1">
    <location>
        <begin position="130"/>
        <end position="132"/>
    </location>
    <ligand>
        <name>NAD(+)</name>
        <dbReference type="ChEBI" id="CHEBI:57540"/>
    </ligand>
</feature>
<feature type="binding site" evidence="1">
    <location>
        <position position="132"/>
    </location>
    <ligand>
        <name>substrate</name>
    </ligand>
</feature>
<feature type="binding site" evidence="1">
    <location>
        <position position="163"/>
    </location>
    <ligand>
        <name>substrate</name>
    </ligand>
</feature>